<dbReference type="EMBL" id="CT573326">
    <property type="protein sequence ID" value="CAK18043.1"/>
    <property type="molecule type" value="Genomic_DNA"/>
</dbReference>
<dbReference type="RefSeq" id="WP_011536396.1">
    <property type="nucleotide sequence ID" value="NC_008027.1"/>
</dbReference>
<dbReference type="SMR" id="Q1I2U3"/>
<dbReference type="STRING" id="384676.PSEEN5431"/>
<dbReference type="GeneID" id="32808337"/>
<dbReference type="KEGG" id="pen:PSEEN5431"/>
<dbReference type="eggNOG" id="COG2003">
    <property type="taxonomic scope" value="Bacteria"/>
</dbReference>
<dbReference type="HOGENOM" id="CLU_073529_0_1_6"/>
<dbReference type="OrthoDB" id="9804482at2"/>
<dbReference type="Proteomes" id="UP000000658">
    <property type="component" value="Chromosome"/>
</dbReference>
<dbReference type="GO" id="GO:0046872">
    <property type="term" value="F:metal ion binding"/>
    <property type="evidence" value="ECO:0007669"/>
    <property type="project" value="UniProtKB-KW"/>
</dbReference>
<dbReference type="GO" id="GO:0008237">
    <property type="term" value="F:metallopeptidase activity"/>
    <property type="evidence" value="ECO:0007669"/>
    <property type="project" value="UniProtKB-KW"/>
</dbReference>
<dbReference type="GO" id="GO:0006508">
    <property type="term" value="P:proteolysis"/>
    <property type="evidence" value="ECO:0007669"/>
    <property type="project" value="UniProtKB-KW"/>
</dbReference>
<dbReference type="CDD" id="cd08071">
    <property type="entry name" value="MPN_DUF2466"/>
    <property type="match status" value="1"/>
</dbReference>
<dbReference type="Gene3D" id="3.40.140.10">
    <property type="entry name" value="Cytidine Deaminase, domain 2"/>
    <property type="match status" value="1"/>
</dbReference>
<dbReference type="InterPro" id="IPR037518">
    <property type="entry name" value="MPN"/>
</dbReference>
<dbReference type="InterPro" id="IPR025657">
    <property type="entry name" value="RadC_JAB"/>
</dbReference>
<dbReference type="InterPro" id="IPR010994">
    <property type="entry name" value="RuvA_2-like"/>
</dbReference>
<dbReference type="InterPro" id="IPR001405">
    <property type="entry name" value="UPF0758"/>
</dbReference>
<dbReference type="InterPro" id="IPR020891">
    <property type="entry name" value="UPF0758_CS"/>
</dbReference>
<dbReference type="InterPro" id="IPR046778">
    <property type="entry name" value="UPF0758_N"/>
</dbReference>
<dbReference type="NCBIfam" id="NF000642">
    <property type="entry name" value="PRK00024.1"/>
    <property type="match status" value="1"/>
</dbReference>
<dbReference type="NCBIfam" id="TIGR00608">
    <property type="entry name" value="radc"/>
    <property type="match status" value="1"/>
</dbReference>
<dbReference type="PANTHER" id="PTHR30471">
    <property type="entry name" value="DNA REPAIR PROTEIN RADC"/>
    <property type="match status" value="1"/>
</dbReference>
<dbReference type="PANTHER" id="PTHR30471:SF3">
    <property type="entry name" value="UPF0758 PROTEIN YEES-RELATED"/>
    <property type="match status" value="1"/>
</dbReference>
<dbReference type="Pfam" id="PF04002">
    <property type="entry name" value="RadC"/>
    <property type="match status" value="1"/>
</dbReference>
<dbReference type="Pfam" id="PF20582">
    <property type="entry name" value="UPF0758_N"/>
    <property type="match status" value="1"/>
</dbReference>
<dbReference type="SUPFAM" id="SSF102712">
    <property type="entry name" value="JAB1/MPN domain"/>
    <property type="match status" value="1"/>
</dbReference>
<dbReference type="SUPFAM" id="SSF47781">
    <property type="entry name" value="RuvA domain 2-like"/>
    <property type="match status" value="1"/>
</dbReference>
<dbReference type="PROSITE" id="PS50249">
    <property type="entry name" value="MPN"/>
    <property type="match status" value="1"/>
</dbReference>
<dbReference type="PROSITE" id="PS01302">
    <property type="entry name" value="UPF0758"/>
    <property type="match status" value="1"/>
</dbReference>
<proteinExistence type="inferred from homology"/>
<evidence type="ECO:0000255" key="1">
    <source>
        <dbReference type="PROSITE-ProRule" id="PRU01182"/>
    </source>
</evidence>
<evidence type="ECO:0000305" key="2"/>
<protein>
    <recommendedName>
        <fullName>UPF0758 protein PSEEN5431</fullName>
    </recommendedName>
</protein>
<reference key="1">
    <citation type="journal article" date="2006" name="Nat. Biotechnol.">
        <title>Complete genome sequence of the entomopathogenic and metabolically versatile soil bacterium Pseudomonas entomophila.</title>
        <authorList>
            <person name="Vodovar N."/>
            <person name="Vallenet D."/>
            <person name="Cruveiller S."/>
            <person name="Rouy Z."/>
            <person name="Barbe V."/>
            <person name="Acosta C."/>
            <person name="Cattolico L."/>
            <person name="Jubin C."/>
            <person name="Lajus A."/>
            <person name="Segurens B."/>
            <person name="Vacherie B."/>
            <person name="Wincker P."/>
            <person name="Weissenbach J."/>
            <person name="Lemaitre B."/>
            <person name="Medigue C."/>
            <person name="Boccard F."/>
        </authorList>
    </citation>
    <scope>NUCLEOTIDE SEQUENCE [LARGE SCALE GENOMIC DNA]</scope>
    <source>
        <strain>L48</strain>
    </source>
</reference>
<name>Y5431_PSEE4</name>
<feature type="chain" id="PRO_1000001678" description="UPF0758 protein PSEEN5431">
    <location>
        <begin position="1"/>
        <end position="226"/>
    </location>
</feature>
<feature type="domain" description="MPN" evidence="1">
    <location>
        <begin position="102"/>
        <end position="224"/>
    </location>
</feature>
<feature type="short sequence motif" description="JAMM motif" evidence="1">
    <location>
        <begin position="173"/>
        <end position="186"/>
    </location>
</feature>
<feature type="binding site" evidence="1">
    <location>
        <position position="173"/>
    </location>
    <ligand>
        <name>Zn(2+)</name>
        <dbReference type="ChEBI" id="CHEBI:29105"/>
        <note>catalytic</note>
    </ligand>
</feature>
<feature type="binding site" evidence="1">
    <location>
        <position position="175"/>
    </location>
    <ligand>
        <name>Zn(2+)</name>
        <dbReference type="ChEBI" id="CHEBI:29105"/>
        <note>catalytic</note>
    </ligand>
</feature>
<feature type="binding site" evidence="1">
    <location>
        <position position="186"/>
    </location>
    <ligand>
        <name>Zn(2+)</name>
        <dbReference type="ChEBI" id="CHEBI:29105"/>
        <note>catalytic</note>
    </ligand>
</feature>
<gene>
    <name type="ordered locus">PSEEN5431</name>
</gene>
<organism>
    <name type="scientific">Pseudomonas entomophila (strain L48)</name>
    <dbReference type="NCBI Taxonomy" id="384676"/>
    <lineage>
        <taxon>Bacteria</taxon>
        <taxon>Pseudomonadati</taxon>
        <taxon>Pseudomonadota</taxon>
        <taxon>Gammaproteobacteria</taxon>
        <taxon>Pseudomonadales</taxon>
        <taxon>Pseudomonadaceae</taxon>
        <taxon>Pseudomonas</taxon>
    </lineage>
</organism>
<sequence>MNIREWPVEERPREKLLNRGAGSLSDAELLAVFLGSGVKGRNVLELARGLLVKFGGLRQVLEADRQAFLGELGLGPVRYSQLQALLEIGRRNLAMSIERESVMDNPLAVRRYLKAMLRHEASEVFGCLFLDTKHRPLAFEILFRGTIDRASIYPREVVRRALLHNAAALILCHNHPSGNCEPSQDDVHLTLMLKRSLALIDVRVVDHVIVGDGEPLSMIEHGWLAG</sequence>
<comment type="similarity">
    <text evidence="2">Belongs to the UPF0758 family.</text>
</comment>
<accession>Q1I2U3</accession>
<keyword id="KW-0378">Hydrolase</keyword>
<keyword id="KW-0479">Metal-binding</keyword>
<keyword id="KW-0482">Metalloprotease</keyword>
<keyword id="KW-0645">Protease</keyword>
<keyword id="KW-0862">Zinc</keyword>